<name>RL1_BIFLO</name>
<accession>Q8G4T3</accession>
<sequence length="230" mass="24873">MVKRSKKYREAAERVDRNNLYTANEAIALLKSMPSYNFDQTVEAVFRLSVDPRKADQLVRGTVNLPHGTGKTAKVLVFARGPKATEATEAGADIVGDDDLIAKVQGGFLDFDAVVATPDMMGKVGRLGRVLGPRGLMPNPKTGTVTMDVTKAVKDIKGGKIEFRVDKNGNLSFLIGKMSFDESALDENFKAVADEVKRLKPSTVKGRYLTKATITSTMNPGVPVDPNTLA</sequence>
<protein>
    <recommendedName>
        <fullName evidence="1">Large ribosomal subunit protein uL1</fullName>
    </recommendedName>
    <alternativeName>
        <fullName evidence="2">50S ribosomal protein L1</fullName>
    </alternativeName>
</protein>
<keyword id="KW-1185">Reference proteome</keyword>
<keyword id="KW-0678">Repressor</keyword>
<keyword id="KW-0687">Ribonucleoprotein</keyword>
<keyword id="KW-0689">Ribosomal protein</keyword>
<keyword id="KW-0694">RNA-binding</keyword>
<keyword id="KW-0699">rRNA-binding</keyword>
<keyword id="KW-0810">Translation regulation</keyword>
<keyword id="KW-0820">tRNA-binding</keyword>
<organism>
    <name type="scientific">Bifidobacterium longum (strain NCC 2705)</name>
    <dbReference type="NCBI Taxonomy" id="206672"/>
    <lineage>
        <taxon>Bacteria</taxon>
        <taxon>Bacillati</taxon>
        <taxon>Actinomycetota</taxon>
        <taxon>Actinomycetes</taxon>
        <taxon>Bifidobacteriales</taxon>
        <taxon>Bifidobacteriaceae</taxon>
        <taxon>Bifidobacterium</taxon>
    </lineage>
</organism>
<gene>
    <name evidence="1" type="primary">rplA</name>
    <name type="ordered locus">BL1291</name>
</gene>
<comment type="function">
    <text evidence="1">Binds directly to 23S rRNA. The L1 stalk is quite mobile in the ribosome, and is involved in E site tRNA release.</text>
</comment>
<comment type="function">
    <text evidence="1">Protein L1 is also a translational repressor protein, it controls the translation of the L11 operon by binding to its mRNA.</text>
</comment>
<comment type="subunit">
    <text evidence="1">Part of the 50S ribosomal subunit.</text>
</comment>
<comment type="similarity">
    <text evidence="1">Belongs to the universal ribosomal protein uL1 family.</text>
</comment>
<proteinExistence type="inferred from homology"/>
<reference key="1">
    <citation type="journal article" date="2002" name="Proc. Natl. Acad. Sci. U.S.A.">
        <title>The genome sequence of Bifidobacterium longum reflects its adaptation to the human gastrointestinal tract.</title>
        <authorList>
            <person name="Schell M.A."/>
            <person name="Karmirantzou M."/>
            <person name="Snel B."/>
            <person name="Vilanova D."/>
            <person name="Berger B."/>
            <person name="Pessi G."/>
            <person name="Zwahlen M.-C."/>
            <person name="Desiere F."/>
            <person name="Bork P."/>
            <person name="Delley M."/>
            <person name="Pridmore R.D."/>
            <person name="Arigoni F."/>
        </authorList>
    </citation>
    <scope>NUCLEOTIDE SEQUENCE [LARGE SCALE GENOMIC DNA]</scope>
    <source>
        <strain>NCC 2705</strain>
    </source>
</reference>
<evidence type="ECO:0000255" key="1">
    <source>
        <dbReference type="HAMAP-Rule" id="MF_01318"/>
    </source>
</evidence>
<evidence type="ECO:0000305" key="2"/>
<feature type="chain" id="PRO_0000125621" description="Large ribosomal subunit protein uL1">
    <location>
        <begin position="1"/>
        <end position="230"/>
    </location>
</feature>
<dbReference type="EMBL" id="AE014295">
    <property type="protein sequence ID" value="AAN25092.1"/>
    <property type="molecule type" value="Genomic_DNA"/>
</dbReference>
<dbReference type="RefSeq" id="NP_696456.1">
    <property type="nucleotide sequence ID" value="NC_004307.2"/>
</dbReference>
<dbReference type="RefSeq" id="WP_003829786.1">
    <property type="nucleotide sequence ID" value="NC_004307.2"/>
</dbReference>
<dbReference type="SMR" id="Q8G4T3"/>
<dbReference type="STRING" id="206672.BL1291"/>
<dbReference type="EnsemblBacteria" id="AAN25092">
    <property type="protein sequence ID" value="AAN25092"/>
    <property type="gene ID" value="BL1291"/>
</dbReference>
<dbReference type="GeneID" id="69578961"/>
<dbReference type="KEGG" id="blo:BL1291"/>
<dbReference type="PATRIC" id="fig|206672.9.peg.1577"/>
<dbReference type="HOGENOM" id="CLU_062853_0_0_11"/>
<dbReference type="OrthoDB" id="9803740at2"/>
<dbReference type="PhylomeDB" id="Q8G4T3"/>
<dbReference type="PRO" id="PR:Q8G4T3"/>
<dbReference type="Proteomes" id="UP000000439">
    <property type="component" value="Chromosome"/>
</dbReference>
<dbReference type="GO" id="GO:0015934">
    <property type="term" value="C:large ribosomal subunit"/>
    <property type="evidence" value="ECO:0007669"/>
    <property type="project" value="InterPro"/>
</dbReference>
<dbReference type="GO" id="GO:0019843">
    <property type="term" value="F:rRNA binding"/>
    <property type="evidence" value="ECO:0007669"/>
    <property type="project" value="UniProtKB-UniRule"/>
</dbReference>
<dbReference type="GO" id="GO:0003735">
    <property type="term" value="F:structural constituent of ribosome"/>
    <property type="evidence" value="ECO:0007669"/>
    <property type="project" value="InterPro"/>
</dbReference>
<dbReference type="GO" id="GO:0000049">
    <property type="term" value="F:tRNA binding"/>
    <property type="evidence" value="ECO:0007669"/>
    <property type="project" value="UniProtKB-KW"/>
</dbReference>
<dbReference type="GO" id="GO:0006417">
    <property type="term" value="P:regulation of translation"/>
    <property type="evidence" value="ECO:0007669"/>
    <property type="project" value="UniProtKB-KW"/>
</dbReference>
<dbReference type="GO" id="GO:0006412">
    <property type="term" value="P:translation"/>
    <property type="evidence" value="ECO:0007669"/>
    <property type="project" value="UniProtKB-UniRule"/>
</dbReference>
<dbReference type="CDD" id="cd00403">
    <property type="entry name" value="Ribosomal_L1"/>
    <property type="match status" value="1"/>
</dbReference>
<dbReference type="FunFam" id="3.40.50.790:FF:000001">
    <property type="entry name" value="50S ribosomal protein L1"/>
    <property type="match status" value="1"/>
</dbReference>
<dbReference type="Gene3D" id="3.30.190.20">
    <property type="match status" value="1"/>
</dbReference>
<dbReference type="Gene3D" id="3.40.50.790">
    <property type="match status" value="1"/>
</dbReference>
<dbReference type="HAMAP" id="MF_01318_B">
    <property type="entry name" value="Ribosomal_uL1_B"/>
    <property type="match status" value="1"/>
</dbReference>
<dbReference type="InterPro" id="IPR005878">
    <property type="entry name" value="Ribosom_uL1_bac-type"/>
</dbReference>
<dbReference type="InterPro" id="IPR002143">
    <property type="entry name" value="Ribosomal_uL1"/>
</dbReference>
<dbReference type="InterPro" id="IPR023674">
    <property type="entry name" value="Ribosomal_uL1-like"/>
</dbReference>
<dbReference type="InterPro" id="IPR028364">
    <property type="entry name" value="Ribosomal_uL1/biogenesis"/>
</dbReference>
<dbReference type="InterPro" id="IPR016095">
    <property type="entry name" value="Ribosomal_uL1_3-a/b-sand"/>
</dbReference>
<dbReference type="InterPro" id="IPR023673">
    <property type="entry name" value="Ribosomal_uL1_CS"/>
</dbReference>
<dbReference type="NCBIfam" id="TIGR01169">
    <property type="entry name" value="rplA_bact"/>
    <property type="match status" value="1"/>
</dbReference>
<dbReference type="PANTHER" id="PTHR36427">
    <property type="entry name" value="54S RIBOSOMAL PROTEIN L1, MITOCHONDRIAL"/>
    <property type="match status" value="1"/>
</dbReference>
<dbReference type="PANTHER" id="PTHR36427:SF3">
    <property type="entry name" value="LARGE RIBOSOMAL SUBUNIT PROTEIN UL1M"/>
    <property type="match status" value="1"/>
</dbReference>
<dbReference type="Pfam" id="PF00687">
    <property type="entry name" value="Ribosomal_L1"/>
    <property type="match status" value="1"/>
</dbReference>
<dbReference type="PIRSF" id="PIRSF002155">
    <property type="entry name" value="Ribosomal_L1"/>
    <property type="match status" value="1"/>
</dbReference>
<dbReference type="SUPFAM" id="SSF56808">
    <property type="entry name" value="Ribosomal protein L1"/>
    <property type="match status" value="1"/>
</dbReference>
<dbReference type="PROSITE" id="PS01199">
    <property type="entry name" value="RIBOSOMAL_L1"/>
    <property type="match status" value="1"/>
</dbReference>